<keyword id="KW-0030">Aminoacyl-tRNA synthetase</keyword>
<keyword id="KW-0067">ATP-binding</keyword>
<keyword id="KW-0963">Cytoplasm</keyword>
<keyword id="KW-0436">Ligase</keyword>
<keyword id="KW-0479">Metal-binding</keyword>
<keyword id="KW-0547">Nucleotide-binding</keyword>
<keyword id="KW-0648">Protein biosynthesis</keyword>
<keyword id="KW-0862">Zinc</keyword>
<evidence type="ECO:0000255" key="1">
    <source>
        <dbReference type="HAMAP-Rule" id="MF_02002"/>
    </source>
</evidence>
<reference key="1">
    <citation type="journal article" date="2008" name="J. Bacteriol.">
        <title>Complete genome sequence of Neisseria gonorrhoeae NCCP11945.</title>
        <authorList>
            <person name="Chung G.T."/>
            <person name="Yoo J.S."/>
            <person name="Oh H.B."/>
            <person name="Lee Y.S."/>
            <person name="Cha S.H."/>
            <person name="Kim S.J."/>
            <person name="Yoo C.K."/>
        </authorList>
    </citation>
    <scope>NUCLEOTIDE SEQUENCE [LARGE SCALE GENOMIC DNA]</scope>
    <source>
        <strain>NCCP11945</strain>
    </source>
</reference>
<feature type="chain" id="PRO_1000189184" description="Isoleucine--tRNA ligase">
    <location>
        <begin position="1"/>
        <end position="929"/>
    </location>
</feature>
<feature type="short sequence motif" description="'HIGH' region">
    <location>
        <begin position="58"/>
        <end position="68"/>
    </location>
</feature>
<feature type="short sequence motif" description="'KMSKS' region">
    <location>
        <begin position="605"/>
        <end position="609"/>
    </location>
</feature>
<feature type="binding site" evidence="1">
    <location>
        <position position="563"/>
    </location>
    <ligand>
        <name>L-isoleucyl-5'-AMP</name>
        <dbReference type="ChEBI" id="CHEBI:178002"/>
    </ligand>
</feature>
<feature type="binding site" evidence="1">
    <location>
        <position position="608"/>
    </location>
    <ligand>
        <name>ATP</name>
        <dbReference type="ChEBI" id="CHEBI:30616"/>
    </ligand>
</feature>
<feature type="binding site" evidence="1">
    <location>
        <position position="892"/>
    </location>
    <ligand>
        <name>Zn(2+)</name>
        <dbReference type="ChEBI" id="CHEBI:29105"/>
    </ligand>
</feature>
<feature type="binding site" evidence="1">
    <location>
        <position position="895"/>
    </location>
    <ligand>
        <name>Zn(2+)</name>
        <dbReference type="ChEBI" id="CHEBI:29105"/>
    </ligand>
</feature>
<feature type="binding site" evidence="1">
    <location>
        <position position="912"/>
    </location>
    <ligand>
        <name>Zn(2+)</name>
        <dbReference type="ChEBI" id="CHEBI:29105"/>
    </ligand>
</feature>
<feature type="binding site" evidence="1">
    <location>
        <position position="915"/>
    </location>
    <ligand>
        <name>Zn(2+)</name>
        <dbReference type="ChEBI" id="CHEBI:29105"/>
    </ligand>
</feature>
<protein>
    <recommendedName>
        <fullName evidence="1">Isoleucine--tRNA ligase</fullName>
        <ecNumber evidence="1">6.1.1.5</ecNumber>
    </recommendedName>
    <alternativeName>
        <fullName evidence="1">Isoleucyl-tRNA synthetase</fullName>
        <shortName evidence="1">IleRS</shortName>
    </alternativeName>
</protein>
<sequence length="929" mass="104155">MTDYSKTVNLLESPFPMRGNLAKCEPAWLKSWYEQKRYQKLREIAKGRPKFILHDGPPYANGDIHIGHAVNKILKDIIIRSKTQAGFDAPYVPGWDCHGLPIEVMVEKLHGKDMPKARFRELCREYAAEQIARQKKDFIRLGVLGDWDNPYLTMDFKTEADTVRMLGEIYKSGYLYRGAKPVQFCLDCGSSLAEAEVEYKDKVSPAIDVAYPFKDTVALAAAFGLAGIEGKAFAVIWTTTPWTLPASQAVSAGADVVYQLIDTPKGKLVLAKDLAEGALKRYGFSDGIAILAETTGDKLENLHMNHPFLERDIPMLNGEHVTTDAGTGLVHTAPAHGLEDYAVCNKYGIELYNPVNAEGKYISETPRVAGMSVWEANPVILQWPEETGNLLASSKIEHSYAHCWRHKTPLIYRATGQWFVGMDKAGSDGKTLRDKAIKAVDDTEFFPPWGRARLESMIEGRPDWVVSRQRYWGTPMTFFVHKETGELHPNSAELLEKVAQRIEEKGIEAWFSLDKSELLSAEDCEHYDKLPDTMDVWFDSGSTHYSVVKQREELEWPADLYLEGSDQHRGWFQSSMLTGCASSMGRAPYKQLLTHGFVVDQNGRKMSKSIGNVVAPQEVYNEFGADILRLWAASTDYSGELAISKEILKRVTESYRRIRNTLSFLFANLSDFNPIEDAVPQAEMVEIDRYALVLARRLQERLAGGYYPRYAFHFAVKDIVSFCSEDLGAFYLDILKDRLYTTKADSRARRSAQTALYHITRSLVLLIAPILCFTGEEAWDIIGGGEEDSVLFHTWHEFPAINEKAEAELVKKWTAIREAREAVTAAIEPLRADKTVGSSLQAEAEITAPEEMAGYLNALGEELRFALLVSKAEVKVGDELAVAAKASDGEKCERCWHYTRDVGAVAGYETVCKRCAENVGGEGETRHYA</sequence>
<proteinExistence type="inferred from homology"/>
<accession>B4RPY6</accession>
<gene>
    <name evidence="1" type="primary">ileS</name>
    <name type="ordered locus">NGK_0100</name>
</gene>
<comment type="function">
    <text evidence="1">Catalyzes the attachment of isoleucine to tRNA(Ile). As IleRS can inadvertently accommodate and process structurally similar amino acids such as valine, to avoid such errors it has two additional distinct tRNA(Ile)-dependent editing activities. One activity is designated as 'pretransfer' editing and involves the hydrolysis of activated Val-AMP. The other activity is designated 'posttransfer' editing and involves deacylation of mischarged Val-tRNA(Ile).</text>
</comment>
<comment type="catalytic activity">
    <reaction evidence="1">
        <text>tRNA(Ile) + L-isoleucine + ATP = L-isoleucyl-tRNA(Ile) + AMP + diphosphate</text>
        <dbReference type="Rhea" id="RHEA:11060"/>
        <dbReference type="Rhea" id="RHEA-COMP:9666"/>
        <dbReference type="Rhea" id="RHEA-COMP:9695"/>
        <dbReference type="ChEBI" id="CHEBI:30616"/>
        <dbReference type="ChEBI" id="CHEBI:33019"/>
        <dbReference type="ChEBI" id="CHEBI:58045"/>
        <dbReference type="ChEBI" id="CHEBI:78442"/>
        <dbReference type="ChEBI" id="CHEBI:78528"/>
        <dbReference type="ChEBI" id="CHEBI:456215"/>
        <dbReference type="EC" id="6.1.1.5"/>
    </reaction>
</comment>
<comment type="cofactor">
    <cofactor evidence="1">
        <name>Zn(2+)</name>
        <dbReference type="ChEBI" id="CHEBI:29105"/>
    </cofactor>
    <text evidence="1">Binds 1 zinc ion per subunit.</text>
</comment>
<comment type="subunit">
    <text evidence="1">Monomer.</text>
</comment>
<comment type="subcellular location">
    <subcellularLocation>
        <location evidence="1">Cytoplasm</location>
    </subcellularLocation>
</comment>
<comment type="domain">
    <text evidence="1">IleRS has two distinct active sites: one for aminoacylation and one for editing. The misactivated valine is translocated from the active site to the editing site, which sterically excludes the correctly activated isoleucine. The single editing site contains two valyl binding pockets, one specific for each substrate (Val-AMP or Val-tRNA(Ile)).</text>
</comment>
<comment type="similarity">
    <text evidence="1">Belongs to the class-I aminoacyl-tRNA synthetase family. IleS type 1 subfamily.</text>
</comment>
<dbReference type="EC" id="6.1.1.5" evidence="1"/>
<dbReference type="EMBL" id="CP001050">
    <property type="protein sequence ID" value="ACF28799.1"/>
    <property type="molecule type" value="Genomic_DNA"/>
</dbReference>
<dbReference type="RefSeq" id="WP_012503353.1">
    <property type="nucleotide sequence ID" value="NC_011035.1"/>
</dbReference>
<dbReference type="SMR" id="B4RPY6"/>
<dbReference type="KEGG" id="ngk:NGK_0100"/>
<dbReference type="HOGENOM" id="CLU_001493_7_1_4"/>
<dbReference type="Proteomes" id="UP000002564">
    <property type="component" value="Chromosome"/>
</dbReference>
<dbReference type="GO" id="GO:0005829">
    <property type="term" value="C:cytosol"/>
    <property type="evidence" value="ECO:0007669"/>
    <property type="project" value="TreeGrafter"/>
</dbReference>
<dbReference type="GO" id="GO:0002161">
    <property type="term" value="F:aminoacyl-tRNA deacylase activity"/>
    <property type="evidence" value="ECO:0007669"/>
    <property type="project" value="InterPro"/>
</dbReference>
<dbReference type="GO" id="GO:0005524">
    <property type="term" value="F:ATP binding"/>
    <property type="evidence" value="ECO:0007669"/>
    <property type="project" value="UniProtKB-UniRule"/>
</dbReference>
<dbReference type="GO" id="GO:0004822">
    <property type="term" value="F:isoleucine-tRNA ligase activity"/>
    <property type="evidence" value="ECO:0007669"/>
    <property type="project" value="UniProtKB-UniRule"/>
</dbReference>
<dbReference type="GO" id="GO:0000049">
    <property type="term" value="F:tRNA binding"/>
    <property type="evidence" value="ECO:0007669"/>
    <property type="project" value="InterPro"/>
</dbReference>
<dbReference type="GO" id="GO:0008270">
    <property type="term" value="F:zinc ion binding"/>
    <property type="evidence" value="ECO:0007669"/>
    <property type="project" value="UniProtKB-UniRule"/>
</dbReference>
<dbReference type="GO" id="GO:0006428">
    <property type="term" value="P:isoleucyl-tRNA aminoacylation"/>
    <property type="evidence" value="ECO:0007669"/>
    <property type="project" value="UniProtKB-UniRule"/>
</dbReference>
<dbReference type="CDD" id="cd07960">
    <property type="entry name" value="Anticodon_Ia_Ile_BEm"/>
    <property type="match status" value="1"/>
</dbReference>
<dbReference type="FunFam" id="3.40.50.620:FF:000042">
    <property type="entry name" value="Isoleucine--tRNA ligase"/>
    <property type="match status" value="1"/>
</dbReference>
<dbReference type="FunFam" id="3.40.50.620:FF:000048">
    <property type="entry name" value="Isoleucine--tRNA ligase"/>
    <property type="match status" value="1"/>
</dbReference>
<dbReference type="FunFam" id="3.90.740.10:FF:000022">
    <property type="entry name" value="Isoleucine--tRNA ligase"/>
    <property type="match status" value="1"/>
</dbReference>
<dbReference type="Gene3D" id="1.10.730.20">
    <property type="match status" value="1"/>
</dbReference>
<dbReference type="Gene3D" id="3.40.50.620">
    <property type="entry name" value="HUPs"/>
    <property type="match status" value="2"/>
</dbReference>
<dbReference type="Gene3D" id="3.90.740.10">
    <property type="entry name" value="Valyl/Leucyl/Isoleucyl-tRNA synthetase, editing domain"/>
    <property type="match status" value="1"/>
</dbReference>
<dbReference type="HAMAP" id="MF_02002">
    <property type="entry name" value="Ile_tRNA_synth_type1"/>
    <property type="match status" value="1"/>
</dbReference>
<dbReference type="InterPro" id="IPR001412">
    <property type="entry name" value="aa-tRNA-synth_I_CS"/>
</dbReference>
<dbReference type="InterPro" id="IPR002300">
    <property type="entry name" value="aa-tRNA-synth_Ia"/>
</dbReference>
<dbReference type="InterPro" id="IPR033708">
    <property type="entry name" value="Anticodon_Ile_BEm"/>
</dbReference>
<dbReference type="InterPro" id="IPR002301">
    <property type="entry name" value="Ile-tRNA-ligase"/>
</dbReference>
<dbReference type="InterPro" id="IPR023585">
    <property type="entry name" value="Ile-tRNA-ligase_type1"/>
</dbReference>
<dbReference type="InterPro" id="IPR050081">
    <property type="entry name" value="Ile-tRNA_ligase"/>
</dbReference>
<dbReference type="InterPro" id="IPR013155">
    <property type="entry name" value="M/V/L/I-tRNA-synth_anticd-bd"/>
</dbReference>
<dbReference type="InterPro" id="IPR014729">
    <property type="entry name" value="Rossmann-like_a/b/a_fold"/>
</dbReference>
<dbReference type="InterPro" id="IPR009080">
    <property type="entry name" value="tRNAsynth_Ia_anticodon-bd"/>
</dbReference>
<dbReference type="InterPro" id="IPR009008">
    <property type="entry name" value="Val/Leu/Ile-tRNA-synth_edit"/>
</dbReference>
<dbReference type="InterPro" id="IPR010663">
    <property type="entry name" value="Znf_FPG/IleRS"/>
</dbReference>
<dbReference type="NCBIfam" id="TIGR00392">
    <property type="entry name" value="ileS"/>
    <property type="match status" value="1"/>
</dbReference>
<dbReference type="PANTHER" id="PTHR42765:SF1">
    <property type="entry name" value="ISOLEUCINE--TRNA LIGASE, MITOCHONDRIAL"/>
    <property type="match status" value="1"/>
</dbReference>
<dbReference type="PANTHER" id="PTHR42765">
    <property type="entry name" value="SOLEUCYL-TRNA SYNTHETASE"/>
    <property type="match status" value="1"/>
</dbReference>
<dbReference type="Pfam" id="PF08264">
    <property type="entry name" value="Anticodon_1"/>
    <property type="match status" value="1"/>
</dbReference>
<dbReference type="Pfam" id="PF00133">
    <property type="entry name" value="tRNA-synt_1"/>
    <property type="match status" value="1"/>
</dbReference>
<dbReference type="Pfam" id="PF06827">
    <property type="entry name" value="zf-FPG_IleRS"/>
    <property type="match status" value="1"/>
</dbReference>
<dbReference type="PRINTS" id="PR00984">
    <property type="entry name" value="TRNASYNTHILE"/>
</dbReference>
<dbReference type="SUPFAM" id="SSF47323">
    <property type="entry name" value="Anticodon-binding domain of a subclass of class I aminoacyl-tRNA synthetases"/>
    <property type="match status" value="1"/>
</dbReference>
<dbReference type="SUPFAM" id="SSF52374">
    <property type="entry name" value="Nucleotidylyl transferase"/>
    <property type="match status" value="1"/>
</dbReference>
<dbReference type="SUPFAM" id="SSF50677">
    <property type="entry name" value="ValRS/IleRS/LeuRS editing domain"/>
    <property type="match status" value="1"/>
</dbReference>
<dbReference type="PROSITE" id="PS00178">
    <property type="entry name" value="AA_TRNA_LIGASE_I"/>
    <property type="match status" value="1"/>
</dbReference>
<organism>
    <name type="scientific">Neisseria gonorrhoeae (strain NCCP11945)</name>
    <dbReference type="NCBI Taxonomy" id="521006"/>
    <lineage>
        <taxon>Bacteria</taxon>
        <taxon>Pseudomonadati</taxon>
        <taxon>Pseudomonadota</taxon>
        <taxon>Betaproteobacteria</taxon>
        <taxon>Neisseriales</taxon>
        <taxon>Neisseriaceae</taxon>
        <taxon>Neisseria</taxon>
    </lineage>
</organism>
<name>SYI_NEIG2</name>